<comment type="function">
    <text evidence="2 13 14">Contractile protein that plays a role in heart development and function (PubMed:23365102, PubMed:32453731). Following phosphorylation, plays a role in cross-bridge cycling kinetics and cardiac muscle contraction by increasing myosin lever arm stiffness and promoting myosin head diffusion; as a consequence of the increase in maximum contraction force and calcium sensitivity of contraction force. These events altogether slow down myosin kinetics and prolong duty cycle resulting in accumulated myosins being cooperatively recruited to actin binding sites to sustain thin filament activation as a means to fine-tune myofilament calcium sensitivity to force (By similarity). During cardiogenesis plays an early role in cardiac contractility by promoting cardiac myofibril assembly (By similarity).</text>
</comment>
<comment type="subunit">
    <text evidence="1 7">Myosin is a hexamer of 2 heavy chains and 4 light chains. Interacts with MYOC (PubMed:11773029).</text>
</comment>
<comment type="interaction">
    <interactant intactId="EBI-725770">
        <id>P10916</id>
    </interactant>
    <interactant intactId="EBI-12100506">
        <id>P78412</id>
        <label>IRX6</label>
    </interactant>
    <organismsDiffer>false</organismsDiffer>
    <experiments>3</experiments>
</comment>
<comment type="interaction">
    <interactant intactId="EBI-725770">
        <id>P10916</id>
    </interactant>
    <interactant intactId="EBI-11692272">
        <id>Q99972</id>
        <label>MYOC</label>
    </interactant>
    <organismsDiffer>false</organismsDiffer>
    <experiments>7</experiments>
</comment>
<comment type="interaction">
    <interactant intactId="EBI-725770">
        <id>P10916</id>
    </interactant>
    <interactant intactId="EBI-11974061">
        <id>Q9UIG4</id>
        <label>PSORS1C2</label>
    </interactant>
    <organismsDiffer>false</organismsDiffer>
    <experiments>3</experiments>
</comment>
<comment type="interaction">
    <interactant intactId="EBI-725770">
        <id>P10916</id>
    </interactant>
    <interactant intactId="EBI-954590">
        <id>P35125-3</id>
        <label>USP6</label>
    </interactant>
    <organismsDiffer>false</organismsDiffer>
    <experiments>5</experiments>
</comment>
<comment type="subcellular location">
    <subcellularLocation>
        <location evidence="2">Cytoplasm</location>
        <location evidence="2">Myofibril</location>
        <location evidence="2">Sarcomere</location>
        <location evidence="2">A band</location>
    </subcellularLocation>
</comment>
<comment type="tissue specificity">
    <text evidence="13 14">Highly expressed in type I muscle fibers.</text>
</comment>
<comment type="PTM">
    <text evidence="3">N-terminus is methylated by METTL11A/NTM1.</text>
</comment>
<comment type="PTM">
    <text evidence="2 3">Phosphorylated by MYLK3 and MYLK2; promotes cardiac muscle contraction and function (By similarity). Dephosphorylated by PPP1CB complexed to PPP1R12B (By similarity). The phosphorylated form in adult is expressed as gradients across the heart from endocardium (low phosphorylation) to epicardium (high phosphorylation); regulates cardiac torsion and workload distribution (By similarity).</text>
</comment>
<comment type="disease" evidence="6 8 9 10 15 16">
    <disease id="DI-00240">
        <name>Cardiomyopathy, familial hypertrophic, 10</name>
        <acronym>CMH10</acronym>
        <description>A hereditary heart disorder characterized by ventricular hypertrophy, which is usually asymmetric and often involves the interventricular septum. The symptoms include dyspnea, syncope, collapse, palpitations, and chest pain. They can be readily provoked by exercise. The disorder has inter- and intrafamilial variability ranging from benign to malignant forms with high risk of cardiac failure and sudden cardiac death. Rarely, patients present a variant of familial hypertrophic cardiomyopathy, characterized by mid-left ventricular chamber thickening.</description>
        <dbReference type="MIM" id="608758"/>
    </disease>
    <text>The disease is caused by variants affecting the gene represented in this entry.</text>
</comment>
<comment type="disease" evidence="13 14">
    <disease id="DI-06176">
        <name>Myopathy, myofibrillar, 12, infantile-onset, with cardiomyopathy</name>
        <acronym>MFM12</acronym>
        <description>A form of myofibrillar myopathy, a group of chronic neuromuscular disorders characterized at ultrastructural level by disintegration of the sarcomeric Z disk and myofibrils, and replacement of the normal myofibrillar markings by small dense granules, or larger hyaline masses, or amorphous material. MFM12 is an autosomal recessive, severe form characterized by progressive myopathy with onset shortly after birth, tremor or clonus at birth, and cardiomyopathy usually leading to death by 6 months of age. Skeletal and cardiac muscle tissues show fiber-type disproportion with small type I and normal sized type II fibers, and myofibrillar disorganization.</description>
        <dbReference type="MIM" id="619424"/>
    </disease>
    <text>The disease is caused by variants affecting the gene represented in this entry.</text>
</comment>
<comment type="miscellaneous">
    <text>This chain binds calcium.</text>
</comment>
<name>MLRV_HUMAN</name>
<keyword id="KW-0002">3D-structure</keyword>
<keyword id="KW-0106">Calcium</keyword>
<keyword id="KW-0122">Cardiomyopathy</keyword>
<keyword id="KW-0963">Cytoplasm</keyword>
<keyword id="KW-0903">Direct protein sequencing</keyword>
<keyword id="KW-0225">Disease variant</keyword>
<keyword id="KW-0479">Metal-binding</keyword>
<keyword id="KW-0488">Methylation</keyword>
<keyword id="KW-0505">Motor protein</keyword>
<keyword id="KW-0514">Muscle protein</keyword>
<keyword id="KW-1060">Myofibrillar myopathy</keyword>
<keyword id="KW-0518">Myosin</keyword>
<keyword id="KW-0597">Phosphoprotein</keyword>
<keyword id="KW-1267">Proteomics identification</keyword>
<keyword id="KW-1185">Reference proteome</keyword>
<keyword id="KW-0677">Repeat</keyword>
<dbReference type="EMBL" id="X14332">
    <property type="protein sequence ID" value="CAA32510.1"/>
    <property type="molecule type" value="mRNA"/>
</dbReference>
<dbReference type="EMBL" id="M22815">
    <property type="protein sequence ID" value="AAA91832.1"/>
    <property type="molecule type" value="mRNA"/>
</dbReference>
<dbReference type="EMBL" id="AF020768">
    <property type="protein sequence ID" value="AAB91993.1"/>
    <property type="molecule type" value="mRNA"/>
</dbReference>
<dbReference type="EMBL" id="S69022">
    <property type="protein sequence ID" value="AAB29658.2"/>
    <property type="molecule type" value="mRNA"/>
</dbReference>
<dbReference type="EMBL" id="BC015821">
    <property type="protein sequence ID" value="AAH15821.1"/>
    <property type="molecule type" value="mRNA"/>
</dbReference>
<dbReference type="EMBL" id="BC031006">
    <property type="protein sequence ID" value="AAH31006.1"/>
    <property type="molecule type" value="mRNA"/>
</dbReference>
<dbReference type="EMBL" id="BC031008">
    <property type="protein sequence ID" value="AAH31008.1"/>
    <property type="molecule type" value="mRNA"/>
</dbReference>
<dbReference type="CCDS" id="CCDS31901.1"/>
<dbReference type="RefSeq" id="NP_000423.2">
    <property type="nucleotide sequence ID" value="NM_000432.4"/>
</dbReference>
<dbReference type="PDB" id="5TBY">
    <property type="method" value="EM"/>
    <property type="resolution" value="20.00 A"/>
    <property type="chains" value="E/F=1-166"/>
</dbReference>
<dbReference type="PDB" id="8ACT">
    <property type="method" value="EM"/>
    <property type="resolution" value="3.60 A"/>
    <property type="chains" value="E/F=20-163"/>
</dbReference>
<dbReference type="PDB" id="8G4L">
    <property type="method" value="EM"/>
    <property type="resolution" value="6.40 A"/>
    <property type="chains" value="ac/ad/ai/aj/aq/ar/bc/bd/bi/bj/bq/br/c/d/i/j/q/r=1-166"/>
</dbReference>
<dbReference type="PDBsum" id="5TBY"/>
<dbReference type="PDBsum" id="8ACT"/>
<dbReference type="PDBsum" id="8G4L"/>
<dbReference type="EMDB" id="EMD-15353"/>
<dbReference type="EMDB" id="EMD-29722"/>
<dbReference type="SMR" id="P10916"/>
<dbReference type="BioGRID" id="110717">
    <property type="interactions" value="27"/>
</dbReference>
<dbReference type="FunCoup" id="P10916">
    <property type="interactions" value="848"/>
</dbReference>
<dbReference type="IntAct" id="P10916">
    <property type="interactions" value="18"/>
</dbReference>
<dbReference type="STRING" id="9606.ENSP00000228841"/>
<dbReference type="ChEMBL" id="CHEMBL3831286"/>
<dbReference type="GlyGen" id="P10916">
    <property type="glycosylation" value="1 site, 1 O-linked glycan (1 site)"/>
</dbReference>
<dbReference type="iPTMnet" id="P10916"/>
<dbReference type="PhosphoSitePlus" id="P10916"/>
<dbReference type="BioMuta" id="MYL2"/>
<dbReference type="DMDM" id="6166556"/>
<dbReference type="MassIVE" id="P10916"/>
<dbReference type="PaxDb" id="9606-ENSP00000228841"/>
<dbReference type="PeptideAtlas" id="P10916"/>
<dbReference type="ProteomicsDB" id="52678"/>
<dbReference type="Antibodypedia" id="31071">
    <property type="antibodies" value="412 antibodies from 38 providers"/>
</dbReference>
<dbReference type="DNASU" id="4633"/>
<dbReference type="Ensembl" id="ENST00000228841.15">
    <property type="protein sequence ID" value="ENSP00000228841.8"/>
    <property type="gene ID" value="ENSG00000111245.18"/>
</dbReference>
<dbReference type="Ensembl" id="ENST00000713800.1">
    <property type="protein sequence ID" value="ENSP00000519106.1"/>
    <property type="gene ID" value="ENSG00000111245.18"/>
</dbReference>
<dbReference type="Ensembl" id="ENST00000713803.1">
    <property type="protein sequence ID" value="ENSP00000519109.1"/>
    <property type="gene ID" value="ENSG00000111245.18"/>
</dbReference>
<dbReference type="Ensembl" id="ENST00000713804.1">
    <property type="protein sequence ID" value="ENSP00000519110.1"/>
    <property type="gene ID" value="ENSG00000111245.18"/>
</dbReference>
<dbReference type="Ensembl" id="ENST00000713805.1">
    <property type="protein sequence ID" value="ENSP00000519111.1"/>
    <property type="gene ID" value="ENSG00000111245.18"/>
</dbReference>
<dbReference type="Ensembl" id="ENST00000713806.1">
    <property type="protein sequence ID" value="ENSP00000519112.1"/>
    <property type="gene ID" value="ENSG00000111245.18"/>
</dbReference>
<dbReference type="Ensembl" id="ENST00000713826.1">
    <property type="protein sequence ID" value="ENSP00000519130.1"/>
    <property type="gene ID" value="ENSG00000111245.18"/>
</dbReference>
<dbReference type="Ensembl" id="ENST00000713828.1">
    <property type="protein sequence ID" value="ENSP00000519132.1"/>
    <property type="gene ID" value="ENSG00000111245.18"/>
</dbReference>
<dbReference type="Ensembl" id="ENST00000713829.1">
    <property type="protein sequence ID" value="ENSP00000519133.1"/>
    <property type="gene ID" value="ENSG00000111245.18"/>
</dbReference>
<dbReference type="Ensembl" id="ENST00000713830.1">
    <property type="protein sequence ID" value="ENSP00000519134.1"/>
    <property type="gene ID" value="ENSG00000111245.18"/>
</dbReference>
<dbReference type="Ensembl" id="ENST00000713831.1">
    <property type="protein sequence ID" value="ENSP00000519135.1"/>
    <property type="gene ID" value="ENSG00000111245.18"/>
</dbReference>
<dbReference type="GeneID" id="4633"/>
<dbReference type="KEGG" id="hsa:4633"/>
<dbReference type="MANE-Select" id="ENST00000228841.15">
    <property type="protein sequence ID" value="ENSP00000228841.8"/>
    <property type="RefSeq nucleotide sequence ID" value="NM_000432.4"/>
    <property type="RefSeq protein sequence ID" value="NP_000423.2"/>
</dbReference>
<dbReference type="AGR" id="HGNC:7583"/>
<dbReference type="CTD" id="4633"/>
<dbReference type="DisGeNET" id="4633"/>
<dbReference type="GeneCards" id="MYL2"/>
<dbReference type="GeneReviews" id="MYL2"/>
<dbReference type="HGNC" id="HGNC:7583">
    <property type="gene designation" value="MYL2"/>
</dbReference>
<dbReference type="HPA" id="ENSG00000111245">
    <property type="expression patterns" value="Group enriched (heart muscle, skeletal muscle, tongue)"/>
</dbReference>
<dbReference type="MalaCards" id="MYL2"/>
<dbReference type="MIM" id="160781">
    <property type="type" value="gene"/>
</dbReference>
<dbReference type="MIM" id="608758">
    <property type="type" value="phenotype"/>
</dbReference>
<dbReference type="MIM" id="619424">
    <property type="type" value="phenotype"/>
</dbReference>
<dbReference type="neXtProt" id="NX_P10916"/>
<dbReference type="OpenTargets" id="ENSG00000111245"/>
<dbReference type="Orphanet" id="2020">
    <property type="disease" value="Congenital fiber-type disproportion myopathy"/>
</dbReference>
<dbReference type="PharmGKB" id="PA31380"/>
<dbReference type="VEuPathDB" id="HostDB:ENSG00000111245"/>
<dbReference type="eggNOG" id="KOG0031">
    <property type="taxonomic scope" value="Eukaryota"/>
</dbReference>
<dbReference type="GeneTree" id="ENSGT00940000155578"/>
<dbReference type="HOGENOM" id="CLU_061288_9_0_1"/>
<dbReference type="InParanoid" id="P10916"/>
<dbReference type="OMA" id="PVEWSAC"/>
<dbReference type="OrthoDB" id="429467at2759"/>
<dbReference type="PAN-GO" id="P10916">
    <property type="GO annotations" value="6 GO annotations based on evolutionary models"/>
</dbReference>
<dbReference type="PhylomeDB" id="P10916"/>
<dbReference type="TreeFam" id="TF314218"/>
<dbReference type="PathwayCommons" id="P10916"/>
<dbReference type="Reactome" id="R-HSA-390522">
    <property type="pathway name" value="Striated Muscle Contraction"/>
</dbReference>
<dbReference type="SignaLink" id="P10916"/>
<dbReference type="SIGNOR" id="P10916"/>
<dbReference type="BioGRID-ORCS" id="4633">
    <property type="hits" value="11 hits in 1150 CRISPR screens"/>
</dbReference>
<dbReference type="ChiTaRS" id="MYL2">
    <property type="organism name" value="human"/>
</dbReference>
<dbReference type="GeneWiki" id="MYL2"/>
<dbReference type="GenomeRNAi" id="4633"/>
<dbReference type="Pharos" id="P10916">
    <property type="development level" value="Tbio"/>
</dbReference>
<dbReference type="PRO" id="PR:P10916"/>
<dbReference type="Proteomes" id="UP000005640">
    <property type="component" value="Chromosome 12"/>
</dbReference>
<dbReference type="RNAct" id="P10916">
    <property type="molecule type" value="protein"/>
</dbReference>
<dbReference type="Bgee" id="ENSG00000111245">
    <property type="expression patterns" value="Expressed in heart right ventricle and 113 other cell types or tissues"/>
</dbReference>
<dbReference type="ExpressionAtlas" id="P10916">
    <property type="expression patterns" value="baseline and differential"/>
</dbReference>
<dbReference type="GO" id="GO:0031672">
    <property type="term" value="C:A band"/>
    <property type="evidence" value="ECO:0007669"/>
    <property type="project" value="UniProtKB-SubCell"/>
</dbReference>
<dbReference type="GO" id="GO:0097512">
    <property type="term" value="C:cardiac myofibril"/>
    <property type="evidence" value="ECO:0000314"/>
    <property type="project" value="CAFA"/>
</dbReference>
<dbReference type="GO" id="GO:0005737">
    <property type="term" value="C:cytoplasm"/>
    <property type="evidence" value="ECO:0000318"/>
    <property type="project" value="GO_Central"/>
</dbReference>
<dbReference type="GO" id="GO:0005856">
    <property type="term" value="C:cytoskeleton"/>
    <property type="evidence" value="ECO:0000314"/>
    <property type="project" value="BHF-UCL"/>
</dbReference>
<dbReference type="GO" id="GO:0005829">
    <property type="term" value="C:cytosol"/>
    <property type="evidence" value="ECO:0000304"/>
    <property type="project" value="Reactome"/>
</dbReference>
<dbReference type="GO" id="GO:0030016">
    <property type="term" value="C:myofibril"/>
    <property type="evidence" value="ECO:0000318"/>
    <property type="project" value="GO_Central"/>
</dbReference>
<dbReference type="GO" id="GO:0016459">
    <property type="term" value="C:myosin complex"/>
    <property type="evidence" value="ECO:0000304"/>
    <property type="project" value="BHF-UCL"/>
</dbReference>
<dbReference type="GO" id="GO:0030017">
    <property type="term" value="C:sarcomere"/>
    <property type="evidence" value="ECO:0000304"/>
    <property type="project" value="BHF-UCL"/>
</dbReference>
<dbReference type="GO" id="GO:0003785">
    <property type="term" value="F:actin monomer binding"/>
    <property type="evidence" value="ECO:0000314"/>
    <property type="project" value="BHF-UCL"/>
</dbReference>
<dbReference type="GO" id="GO:0005509">
    <property type="term" value="F:calcium ion binding"/>
    <property type="evidence" value="ECO:0000314"/>
    <property type="project" value="MGI"/>
</dbReference>
<dbReference type="GO" id="GO:0032036">
    <property type="term" value="F:myosin heavy chain binding"/>
    <property type="evidence" value="ECO:0000303"/>
    <property type="project" value="BHF-UCL"/>
</dbReference>
<dbReference type="GO" id="GO:0008307">
    <property type="term" value="F:structural constituent of muscle"/>
    <property type="evidence" value="ECO:0000315"/>
    <property type="project" value="UniProtKB"/>
</dbReference>
<dbReference type="GO" id="GO:0060048">
    <property type="term" value="P:cardiac muscle contraction"/>
    <property type="evidence" value="ECO:0000318"/>
    <property type="project" value="GO_Central"/>
</dbReference>
<dbReference type="GO" id="GO:0055003">
    <property type="term" value="P:cardiac myofibril assembly"/>
    <property type="evidence" value="ECO:0000250"/>
    <property type="project" value="BHF-UCL"/>
</dbReference>
<dbReference type="GO" id="GO:0060047">
    <property type="term" value="P:heart contraction"/>
    <property type="evidence" value="ECO:0000250"/>
    <property type="project" value="BHF-UCL"/>
</dbReference>
<dbReference type="GO" id="GO:0007507">
    <property type="term" value="P:heart development"/>
    <property type="evidence" value="ECO:0000250"/>
    <property type="project" value="UniProtKB"/>
</dbReference>
<dbReference type="GO" id="GO:0042694">
    <property type="term" value="P:muscle cell fate specification"/>
    <property type="evidence" value="ECO:0000318"/>
    <property type="project" value="GO_Central"/>
</dbReference>
<dbReference type="GO" id="GO:0030308">
    <property type="term" value="P:negative regulation of cell growth"/>
    <property type="evidence" value="ECO:0000315"/>
    <property type="project" value="BHF-UCL"/>
</dbReference>
<dbReference type="GO" id="GO:0098735">
    <property type="term" value="P:positive regulation of the force of heart contraction"/>
    <property type="evidence" value="ECO:0000250"/>
    <property type="project" value="UniProtKB"/>
</dbReference>
<dbReference type="GO" id="GO:0009791">
    <property type="term" value="P:post-embryonic development"/>
    <property type="evidence" value="ECO:0007669"/>
    <property type="project" value="Ensembl"/>
</dbReference>
<dbReference type="GO" id="GO:0006942">
    <property type="term" value="P:regulation of striated muscle contraction"/>
    <property type="evidence" value="ECO:0000304"/>
    <property type="project" value="ProtInc"/>
</dbReference>
<dbReference type="GO" id="GO:0002026">
    <property type="term" value="P:regulation of the force of heart contraction"/>
    <property type="evidence" value="ECO:0000250"/>
    <property type="project" value="UniProtKB"/>
</dbReference>
<dbReference type="GO" id="GO:0055010">
    <property type="term" value="P:ventricular cardiac muscle tissue morphogenesis"/>
    <property type="evidence" value="ECO:0000315"/>
    <property type="project" value="BHF-UCL"/>
</dbReference>
<dbReference type="CDD" id="cd00051">
    <property type="entry name" value="EFh"/>
    <property type="match status" value="1"/>
</dbReference>
<dbReference type="FunFam" id="1.10.238.10:FF:000010">
    <property type="entry name" value="Myosin regulatory light chain 2, atrial isoform"/>
    <property type="match status" value="1"/>
</dbReference>
<dbReference type="FunFam" id="1.10.238.10:FF:000007">
    <property type="entry name" value="Putative myosin regulatory light chain sqh"/>
    <property type="match status" value="1"/>
</dbReference>
<dbReference type="Gene3D" id="1.10.238.10">
    <property type="entry name" value="EF-hand"/>
    <property type="match status" value="2"/>
</dbReference>
<dbReference type="InterPro" id="IPR011992">
    <property type="entry name" value="EF-hand-dom_pair"/>
</dbReference>
<dbReference type="InterPro" id="IPR018247">
    <property type="entry name" value="EF_Hand_1_Ca_BS"/>
</dbReference>
<dbReference type="InterPro" id="IPR002048">
    <property type="entry name" value="EF_hand_dom"/>
</dbReference>
<dbReference type="InterPro" id="IPR050403">
    <property type="entry name" value="Myosin_RLC"/>
</dbReference>
<dbReference type="PANTHER" id="PTHR23049">
    <property type="entry name" value="MYOSIN REGULATORY LIGHT CHAIN 2"/>
    <property type="match status" value="1"/>
</dbReference>
<dbReference type="Pfam" id="PF13499">
    <property type="entry name" value="EF-hand_7"/>
    <property type="match status" value="1"/>
</dbReference>
<dbReference type="SMART" id="SM00054">
    <property type="entry name" value="EFh"/>
    <property type="match status" value="3"/>
</dbReference>
<dbReference type="SUPFAM" id="SSF47473">
    <property type="entry name" value="EF-hand"/>
    <property type="match status" value="1"/>
</dbReference>
<dbReference type="PROSITE" id="PS00018">
    <property type="entry name" value="EF_HAND_1"/>
    <property type="match status" value="1"/>
</dbReference>
<dbReference type="PROSITE" id="PS50222">
    <property type="entry name" value="EF_HAND_2"/>
    <property type="match status" value="3"/>
</dbReference>
<sequence>MAPKKAKKRAGGANSNVFSMFEQTQIQEFKEAFTIMDQNRDGFIDKNDLRDTFAALGRVNVKNEEIDEMIKEAPGPINFTVFLTMFGEKLKGADPEETILNAFKVFDPEGKGVLKADYVREMLTTQAERFSKEEVDQMFAAFPPDVTGNLDYKNLVHIITHGEEKD</sequence>
<reference key="1">
    <citation type="journal article" date="1989" name="Nucleic Acids Res.">
        <title>Isolation and nucleotide sequence of the cDNA encoding human ventricular myosin light chain 2.</title>
        <authorList>
            <person name="Libera L.D."/>
            <person name="Hoffmann E."/>
            <person name="Floroff M."/>
            <person name="Jackowski G."/>
        </authorList>
    </citation>
    <scope>NUCLEOTIDE SEQUENCE [MRNA]</scope>
    <source>
        <tissue>Heart</tissue>
    </source>
</reference>
<reference key="2">
    <citation type="submission" date="1996-03" db="EMBL/GenBank/DDBJ databases">
        <authorList>
            <person name="Wu Q.L."/>
        </authorList>
    </citation>
    <scope>NUCLEOTIDE SEQUENCE [MRNA]</scope>
    <source>
        <tissue>Muscle</tissue>
    </source>
</reference>
<reference key="3">
    <citation type="submission" date="1997-08" db="EMBL/GenBank/DDBJ databases">
        <authorList>
            <person name="Margossian S.S."/>
            <person name="Umeda P.K."/>
            <person name="Sciaky D."/>
            <person name="Anderson P.A.W."/>
        </authorList>
    </citation>
    <scope>NUCLEOTIDE SEQUENCE [MRNA]</scope>
</reference>
<reference key="4">
    <citation type="journal article" date="1993" name="Cell. Mol. Biol. Res.">
        <title>Interaction of a conserved peptide domain in recombinant human ventricular myosin light chain-2 with myosin heavy chain.</title>
        <authorList>
            <person name="Wadgaonkar R."/>
            <person name="Shafiq S."/>
            <person name="Rajmanickam C."/>
            <person name="Siddiqui M.A."/>
        </authorList>
    </citation>
    <scope>NUCLEOTIDE SEQUENCE [MRNA]</scope>
</reference>
<reference key="5">
    <citation type="journal article" date="2004" name="Genome Res.">
        <title>The status, quality, and expansion of the NIH full-length cDNA project: the Mammalian Gene Collection (MGC).</title>
        <authorList>
            <consortium name="The MGC Project Team"/>
        </authorList>
    </citation>
    <scope>NUCLEOTIDE SEQUENCE [LARGE SCALE MRNA]</scope>
    <source>
        <tissue>Prostate</tissue>
        <tissue>Skeletal muscle</tissue>
    </source>
</reference>
<reference key="6">
    <citation type="journal article" date="1995" name="Electrophoresis">
        <title>The major protein expression profile and two-dimensional protein database of human heart.</title>
        <authorList>
            <person name="Kovalyov L.I."/>
            <person name="Shishkin S.S."/>
            <person name="Efimochkin A.S."/>
            <person name="Kovalyova M.A."/>
            <person name="Ershova E.S."/>
            <person name="Egorov T.A."/>
            <person name="Musalyamov A.K."/>
        </authorList>
    </citation>
    <scope>PROTEIN SEQUENCE OF 138-144</scope>
    <source>
        <tissue>Heart</tissue>
    </source>
</reference>
<reference key="7">
    <citation type="journal article" date="2002" name="Invest. Ophthalmol. Vis. Sci.">
        <title>Protein interactions with myocilin.</title>
        <authorList>
            <person name="Wentz-Hunter K."/>
            <person name="Ueda J."/>
            <person name="Yue B.Y."/>
        </authorList>
    </citation>
    <scope>INTERACTION WITH MYOC</scope>
</reference>
<reference key="8">
    <citation type="journal article" date="2010" name="J. Biol. Chem.">
        <title>Cardiac myosin is a substrate for zipper-interacting protein kinase (ZIPK).</title>
        <authorList>
            <person name="Chang A.N."/>
            <person name="Chen G."/>
            <person name="Gerard R.D."/>
            <person name="Kamm K.E."/>
            <person name="Stull J.T."/>
        </authorList>
    </citation>
    <scope>PHOSPHORYLATION AT SER-15 BY DAPK3</scope>
    <scope>IDENTIFICATION BY MASS SPECTROMETRY</scope>
</reference>
<reference key="9">
    <citation type="journal article" date="2010" name="Mol. Cell. Proteomics">
        <title>A novel, in-solution separation of endogenous cardiac sarcomeric proteins and identification of distinct charged variants of regulatory light chain.</title>
        <authorList>
            <person name="Scruggs S.B."/>
            <person name="Reisdorph R."/>
            <person name="Armstrong M.L."/>
            <person name="Warren C.M."/>
            <person name="Reisdorph N."/>
            <person name="Solaro R.J."/>
            <person name="Buttrick P.M."/>
        </authorList>
    </citation>
    <scope>PHOSPHORYLATION AT SER-15</scope>
    <scope>DEAMIDATION AT ASN-14</scope>
    <scope>IDENTIFICATION BY MASS SPECTROMETRY</scope>
</reference>
<reference key="10">
    <citation type="journal article" date="2013" name="Brain">
        <title>Recessive MYL2 mutations cause infantile type I muscle fibre disease and cardiomyopathy.</title>
        <authorList>
            <person name="Weterman M.A."/>
            <person name="Barth P.G."/>
            <person name="van Spaendonck-Zwarts K.Y."/>
            <person name="Aronica E."/>
            <person name="Poll-The B.T."/>
            <person name="Brouwer O.F."/>
            <person name="van Tintelen J.P."/>
            <person name="Qahar Z."/>
            <person name="Bradley E.J."/>
            <person name="de Wissel M."/>
            <person name="Salviati L."/>
            <person name="Angelini C."/>
            <person name="van den Heuvel L."/>
            <person name="Thomasse Y.E."/>
            <person name="Backx A.P."/>
            <person name="Nuernberg G."/>
            <person name="Nuernberg P."/>
            <person name="Baas F."/>
        </authorList>
    </citation>
    <scope>INVOLVEMENT IN MFM12</scope>
    <scope>FUNCTION</scope>
    <scope>TISSUE SPECIFICITY</scope>
</reference>
<reference key="11">
    <citation type="journal article" date="2020" name="PLoS Genet.">
        <title>Novel frameshift variant in MYL2 reveals molecular differences between dominant and recessive forms of hypertrophic cardiomyopathy.</title>
        <authorList>
            <person name="Manivannan S.N."/>
            <person name="Darouich S."/>
            <person name="Masmoudi A."/>
            <person name="Gordon D."/>
            <person name="Zender G."/>
            <person name="Han Z."/>
            <person name="Fitzgerald-Butt S."/>
            <person name="White P."/>
            <person name="McBride K.L."/>
            <person name="Kharrat M."/>
            <person name="Garg V."/>
        </authorList>
    </citation>
    <scope>INVOLVEMENT IN MFM12</scope>
    <scope>FUNCTION</scope>
    <scope>TISSUE SPECIFICITY</scope>
</reference>
<reference key="12">
    <citation type="journal article" date="1996" name="Nat. Genet.">
        <title>Mutations in either the essential or regulatory light chains of myosin are associated with a rare myopathy in human heart and skeletal muscle.</title>
        <authorList>
            <person name="Poetter K."/>
            <person name="Jiang H."/>
            <person name="Hassanzadeh S."/>
            <person name="Master S.R."/>
            <person name="Chang A."/>
            <person name="Dalakas M.C."/>
            <person name="Rayment I."/>
            <person name="Sellers J.R."/>
            <person name="Fananapazir L."/>
            <person name="Epstein N.D."/>
        </authorList>
    </citation>
    <scope>VARIANTS CMH10 THR-13; LYS-22 AND ALA-95</scope>
</reference>
<reference key="13">
    <citation type="journal article" date="1998" name="J. Mol. Med.">
        <title>Identification of two novel mutations in the ventricular regulatory myosin light chain gene (MYL2) associated with familial and classical forms of hypertrophic cardiomyopathy.</title>
        <authorList>
            <person name="Flavigny J."/>
            <person name="Richard P."/>
            <person name="Isnard R."/>
            <person name="Carrier L."/>
            <person name="Charron P."/>
            <person name="Bonne G."/>
            <person name="Forissier J.F."/>
            <person name="Desnos M."/>
            <person name="Dubourg O."/>
            <person name="Komajda M."/>
            <person name="Schwartz K."/>
            <person name="Hainque B."/>
        </authorList>
    </citation>
    <scope>VARIANTS CMH10 LEU-18 AND GLN-58</scope>
</reference>
<reference key="14">
    <citation type="journal article" date="2001" name="J. Biol. Chem.">
        <title>Familial hypertrophic cardiomyopathy mutations in the regulatory light chains of myosin affect their structure, Ca2+ binding, and phosphorylation.</title>
        <authorList>
            <person name="Szczesna D."/>
            <person name="Ghosh D."/>
            <person name="Li Q."/>
            <person name="Gomes A.V."/>
            <person name="Guzman G."/>
            <person name="Arana C."/>
            <person name="Zhi G."/>
            <person name="Stull J.T."/>
            <person name="Potter J.D."/>
        </authorList>
    </citation>
    <scope>VARIANTS CMH10 THR-13; LEU-18; LYS-22; GLN-58 AND ALA-95</scope>
    <scope>CHARACTERIZATION OF VARIANTS CMH10 THR-13; LEU-18; LYS-22; GLN-58 AND ALA-95</scope>
</reference>
<reference key="15">
    <citation type="journal article" date="2002" name="Eur. J. Hum. Genet.">
        <title>Systematic analysis of the regulatory and essential myosin light chain genes: genetic variants and mutations in hypertrophic cardiomyopathy.</title>
        <authorList>
            <person name="Kabaeva Z.T."/>
            <person name="Perrot A."/>
            <person name="Wolter B."/>
            <person name="Dietz R."/>
            <person name="Cardim N."/>
            <person name="Correia J.M."/>
            <person name="Schulte H.D."/>
            <person name="Aldashev A.A."/>
            <person name="Mirrakhimov M.M."/>
            <person name="Osterziel K.J."/>
        </authorList>
    </citation>
    <scope>VARIANTS CMH10 LYS-22 AND GLN-58</scope>
</reference>
<reference key="16">
    <citation type="journal article" date="2003" name="Circulation">
        <title>Hypertrophic cardiomyopathy: distribution of disease genes, spectrum of mutations, and implications for a molecular diagnosis strategy.</title>
        <authorList>
            <person name="Richard P."/>
            <person name="Charron P."/>
            <person name="Carrier L."/>
            <person name="Ledeuil C."/>
            <person name="Cheav T."/>
            <person name="Pichereau C."/>
            <person name="Benaiche A."/>
            <person name="Isnard R."/>
            <person name="Dubourg O."/>
            <person name="Burban M."/>
            <person name="Gueffet J.-P."/>
            <person name="Millaire A."/>
            <person name="Desnos M."/>
            <person name="Schwartz K."/>
            <person name="Hainque B."/>
            <person name="Komajda M."/>
        </authorList>
    </citation>
    <scope>VARIANT CMH10 VAL-166</scope>
</reference>
<reference key="17">
    <citation type="journal article" date="2004" name="Circulation">
        <authorList>
            <person name="Richard P."/>
            <person name="Charron P."/>
            <person name="Carrier L."/>
            <person name="Ledeuil C."/>
            <person name="Cheav T."/>
            <person name="Pichereau C."/>
            <person name="Benaiche A."/>
            <person name="Isnard R."/>
            <person name="Dubourg O."/>
            <person name="Burban M."/>
            <person name="Gueffet J.-P."/>
            <person name="Millaire A."/>
            <person name="Desnos M."/>
            <person name="Schwartz K."/>
            <person name="Hainque B."/>
            <person name="Komajda M."/>
        </authorList>
    </citation>
    <scope>ERRATUM OF PUBMED:12707239</scope>
</reference>
<reference key="18">
    <citation type="journal article" date="2003" name="J. Mol. Cell. Cardiol.">
        <title>Identification of the genotypes causing hypertrophic cardiomyopathy in northern Sweden.</title>
        <authorList>
            <person name="Moerner S."/>
            <person name="Richard P."/>
            <person name="Kazzam E."/>
            <person name="Hellman U."/>
            <person name="Hainque B."/>
            <person name="Schwartz K."/>
            <person name="Waldenstroem A."/>
        </authorList>
    </citation>
    <scope>VARIANT CMH10 GLN-58</scope>
</reference>
<feature type="initiator methionine" description="Removed" evidence="3">
    <location>
        <position position="1"/>
    </location>
</feature>
<feature type="chain" id="PRO_0000198727" description="Myosin regulatory light chain 2, ventricular/cardiac muscle isoform">
    <location>
        <begin position="2"/>
        <end position="166"/>
    </location>
</feature>
<feature type="domain" description="EF-hand 1" evidence="5">
    <location>
        <begin position="24"/>
        <end position="59"/>
    </location>
</feature>
<feature type="domain" description="EF-hand 2" evidence="5">
    <location>
        <begin position="94"/>
        <end position="129"/>
    </location>
</feature>
<feature type="domain" description="EF-hand 3" evidence="5">
    <location>
        <begin position="130"/>
        <end position="165"/>
    </location>
</feature>
<feature type="binding site" evidence="5">
    <location>
        <position position="37"/>
    </location>
    <ligand>
        <name>Ca(2+)</name>
        <dbReference type="ChEBI" id="CHEBI:29108"/>
    </ligand>
</feature>
<feature type="binding site" evidence="5">
    <location>
        <position position="39"/>
    </location>
    <ligand>
        <name>Ca(2+)</name>
        <dbReference type="ChEBI" id="CHEBI:29108"/>
    </ligand>
</feature>
<feature type="binding site" evidence="5">
    <location>
        <position position="41"/>
    </location>
    <ligand>
        <name>Ca(2+)</name>
        <dbReference type="ChEBI" id="CHEBI:29108"/>
    </ligand>
</feature>
<feature type="binding site" evidence="5">
    <location>
        <position position="48"/>
    </location>
    <ligand>
        <name>Ca(2+)</name>
        <dbReference type="ChEBI" id="CHEBI:29108"/>
    </ligand>
</feature>
<feature type="modified residue" description="N,N,N-trimethylalanine" evidence="3">
    <location>
        <position position="2"/>
    </location>
</feature>
<feature type="modified residue" description="Deamidated asparagine" evidence="12">
    <location>
        <position position="14"/>
    </location>
</feature>
<feature type="modified residue" description="Phosphoserine; by ZIPK/DAPK3" evidence="11 12">
    <location>
        <position position="15"/>
    </location>
</feature>
<feature type="modified residue" description="Phosphoserine" evidence="3">
    <location>
        <position position="19"/>
    </location>
</feature>
<feature type="modified residue" description="Phosphothreonine" evidence="2">
    <location>
        <position position="52"/>
    </location>
</feature>
<feature type="sequence variant" id="VAR_004601" description="In CMH10; with mid-left ventricular chamber thickening; decrease calcium binding affinity; large increase in its calcium binding affinity upon phosphorylation; dbSNP:rs104894363." evidence="6 15">
    <original>A</original>
    <variation>T</variation>
    <location>
        <position position="13"/>
    </location>
</feature>
<feature type="sequence variant" id="VAR_004602" description="In CMH10; decrease calcium binding affinity; dbSNP:rs104894370." evidence="6 16">
    <original>F</original>
    <variation>L</variation>
    <location>
        <position position="18"/>
    </location>
</feature>
<feature type="sequence variant" id="VAR_004603" description="In CMH10; some patients present with mid-left ventricular chamber thickening; significantly decrease calcium binding affinity; loss of phosphorylation; dbSNP:rs104894368." evidence="6 8 15">
    <original>E</original>
    <variation>K</variation>
    <location>
        <position position="22"/>
    </location>
</feature>
<feature type="sequence variant" id="VAR_029449" description="In dbSNP:rs2428140.">
    <original>G</original>
    <variation>R</variation>
    <location>
        <position position="57"/>
    </location>
</feature>
<feature type="sequence variant" id="VAR_004604" description="In CMH10; impairs calcium binding; bind calcium upon phosphorylation; dbSNP:rs104894369." evidence="6 8 10 16">
    <original>R</original>
    <variation>Q</variation>
    <location>
        <position position="58"/>
    </location>
</feature>
<feature type="sequence variant" id="VAR_004605" description="In CMH10; with mid-left ventricular chamber thickening; decrease calcium binding affinity; dbSNP:rs121913658." evidence="6 15">
    <original>P</original>
    <variation>A</variation>
    <location>
        <position position="95"/>
    </location>
</feature>
<feature type="sequence variant" id="VAR_019844" description="In CMH10; dbSNP:rs199474815." evidence="9">
    <original>D</original>
    <variation>V</variation>
    <location>
        <position position="166"/>
    </location>
</feature>
<gene>
    <name evidence="21" type="primary">MYL2</name>
    <name evidence="18" type="synonym">MLC2</name>
</gene>
<protein>
    <recommendedName>
        <fullName evidence="20">Myosin regulatory light chain 2, ventricular/cardiac muscle isoform</fullName>
        <shortName evidence="2">MLC-2</shortName>
        <shortName>MLC-2v</shortName>
    </recommendedName>
    <alternativeName>
        <fullName evidence="19">Cardiac myosin light chain 2</fullName>
    </alternativeName>
    <alternativeName>
        <fullName evidence="4">Myosin light chain 2, slow skeletal/ventricular muscle isoform</fullName>
        <shortName evidence="4">MLC-2s/v</shortName>
    </alternativeName>
    <alternativeName>
        <fullName evidence="17">Ventricular myosin light chain 2</fullName>
    </alternativeName>
</protein>
<accession>P10916</accession>
<accession>Q16123</accession>
<proteinExistence type="evidence at protein level"/>
<evidence type="ECO:0000250" key="1"/>
<evidence type="ECO:0000250" key="2">
    <source>
        <dbReference type="UniProtKB" id="P08733"/>
    </source>
</evidence>
<evidence type="ECO:0000250" key="3">
    <source>
        <dbReference type="UniProtKB" id="P51667"/>
    </source>
</evidence>
<evidence type="ECO:0000250" key="4">
    <source>
        <dbReference type="UniProtKB" id="Q7M2V4"/>
    </source>
</evidence>
<evidence type="ECO:0000255" key="5">
    <source>
        <dbReference type="PROSITE-ProRule" id="PRU00448"/>
    </source>
</evidence>
<evidence type="ECO:0000269" key="6">
    <source>
    </source>
</evidence>
<evidence type="ECO:0000269" key="7">
    <source>
    </source>
</evidence>
<evidence type="ECO:0000269" key="8">
    <source>
    </source>
</evidence>
<evidence type="ECO:0000269" key="9">
    <source>
    </source>
</evidence>
<evidence type="ECO:0000269" key="10">
    <source>
    </source>
</evidence>
<evidence type="ECO:0000269" key="11">
    <source>
    </source>
</evidence>
<evidence type="ECO:0000269" key="12">
    <source>
    </source>
</evidence>
<evidence type="ECO:0000269" key="13">
    <source>
    </source>
</evidence>
<evidence type="ECO:0000269" key="14">
    <source>
    </source>
</evidence>
<evidence type="ECO:0000269" key="15">
    <source>
    </source>
</evidence>
<evidence type="ECO:0000269" key="16">
    <source>
    </source>
</evidence>
<evidence type="ECO:0000303" key="17">
    <source>
    </source>
</evidence>
<evidence type="ECO:0000303" key="18">
    <source>
    </source>
</evidence>
<evidence type="ECO:0000303" key="19">
    <source ref="3"/>
</evidence>
<evidence type="ECO:0000305" key="20"/>
<evidence type="ECO:0000312" key="21">
    <source>
        <dbReference type="HGNC" id="HGNC:7583"/>
    </source>
</evidence>
<organism>
    <name type="scientific">Homo sapiens</name>
    <name type="common">Human</name>
    <dbReference type="NCBI Taxonomy" id="9606"/>
    <lineage>
        <taxon>Eukaryota</taxon>
        <taxon>Metazoa</taxon>
        <taxon>Chordata</taxon>
        <taxon>Craniata</taxon>
        <taxon>Vertebrata</taxon>
        <taxon>Euteleostomi</taxon>
        <taxon>Mammalia</taxon>
        <taxon>Eutheria</taxon>
        <taxon>Euarchontoglires</taxon>
        <taxon>Primates</taxon>
        <taxon>Haplorrhini</taxon>
        <taxon>Catarrhini</taxon>
        <taxon>Hominidae</taxon>
        <taxon>Homo</taxon>
    </lineage>
</organism>